<comment type="function">
    <text evidence="1">Involved in the biosynthesis of branched-chain amino acids (BCAA). Catalyzes an alkyl-migration followed by a ketol-acid reduction of (S)-2-acetolactate (S2AL) to yield (R)-2,3-dihydroxy-isovalerate. In the isomerase reaction, S2AL is rearranged via a Mg-dependent methyl migration to produce 3-hydroxy-3-methyl-2-ketobutyrate (HMKB). In the reductase reaction, this 2-ketoacid undergoes a metal-dependent reduction by NADPH to yield (R)-2,3-dihydroxy-isovalerate.</text>
</comment>
<comment type="catalytic activity">
    <reaction evidence="1">
        <text>(2R)-2,3-dihydroxy-3-methylbutanoate + NADP(+) = (2S)-2-acetolactate + NADPH + H(+)</text>
        <dbReference type="Rhea" id="RHEA:22068"/>
        <dbReference type="ChEBI" id="CHEBI:15378"/>
        <dbReference type="ChEBI" id="CHEBI:49072"/>
        <dbReference type="ChEBI" id="CHEBI:57783"/>
        <dbReference type="ChEBI" id="CHEBI:58349"/>
        <dbReference type="ChEBI" id="CHEBI:58476"/>
        <dbReference type="EC" id="1.1.1.86"/>
    </reaction>
</comment>
<comment type="catalytic activity">
    <reaction evidence="1">
        <text>(2R,3R)-2,3-dihydroxy-3-methylpentanoate + NADP(+) = (S)-2-ethyl-2-hydroxy-3-oxobutanoate + NADPH + H(+)</text>
        <dbReference type="Rhea" id="RHEA:13493"/>
        <dbReference type="ChEBI" id="CHEBI:15378"/>
        <dbReference type="ChEBI" id="CHEBI:49256"/>
        <dbReference type="ChEBI" id="CHEBI:49258"/>
        <dbReference type="ChEBI" id="CHEBI:57783"/>
        <dbReference type="ChEBI" id="CHEBI:58349"/>
        <dbReference type="EC" id="1.1.1.86"/>
    </reaction>
</comment>
<comment type="cofactor">
    <cofactor evidence="1">
        <name>Mg(2+)</name>
        <dbReference type="ChEBI" id="CHEBI:18420"/>
    </cofactor>
    <text evidence="1">Binds 2 magnesium ions per subunit.</text>
</comment>
<comment type="pathway">
    <text evidence="1">Amino-acid biosynthesis; L-isoleucine biosynthesis; L-isoleucine from 2-oxobutanoate: step 2/4.</text>
</comment>
<comment type="pathway">
    <text evidence="1">Amino-acid biosynthesis; L-valine biosynthesis; L-valine from pyruvate: step 2/4.</text>
</comment>
<comment type="similarity">
    <text evidence="1">Belongs to the ketol-acid reductoisomerase family.</text>
</comment>
<keyword id="KW-0028">Amino-acid biosynthesis</keyword>
<keyword id="KW-0100">Branched-chain amino acid biosynthesis</keyword>
<keyword id="KW-0460">Magnesium</keyword>
<keyword id="KW-0479">Metal-binding</keyword>
<keyword id="KW-0521">NADP</keyword>
<keyword id="KW-0560">Oxidoreductase</keyword>
<keyword id="KW-1185">Reference proteome</keyword>
<evidence type="ECO:0000255" key="1">
    <source>
        <dbReference type="HAMAP-Rule" id="MF_00435"/>
    </source>
</evidence>
<evidence type="ECO:0000255" key="2">
    <source>
        <dbReference type="PROSITE-ProRule" id="PRU01197"/>
    </source>
</evidence>
<evidence type="ECO:0000255" key="3">
    <source>
        <dbReference type="PROSITE-ProRule" id="PRU01198"/>
    </source>
</evidence>
<proteinExistence type="inferred from homology"/>
<feature type="chain" id="PRO_0000151373" description="Ketol-acid reductoisomerase (NADP(+))">
    <location>
        <begin position="1"/>
        <end position="336"/>
    </location>
</feature>
<feature type="domain" description="KARI N-terminal Rossmann" evidence="2">
    <location>
        <begin position="1"/>
        <end position="182"/>
    </location>
</feature>
<feature type="domain" description="KARI C-terminal knotted" evidence="3">
    <location>
        <begin position="183"/>
        <end position="328"/>
    </location>
</feature>
<feature type="active site" evidence="1">
    <location>
        <position position="108"/>
    </location>
</feature>
<feature type="binding site" evidence="1">
    <location>
        <begin position="25"/>
        <end position="28"/>
    </location>
    <ligand>
        <name>NADP(+)</name>
        <dbReference type="ChEBI" id="CHEBI:58349"/>
    </ligand>
</feature>
<feature type="binding site" evidence="1">
    <location>
        <position position="48"/>
    </location>
    <ligand>
        <name>NADP(+)</name>
        <dbReference type="ChEBI" id="CHEBI:58349"/>
    </ligand>
</feature>
<feature type="binding site" evidence="1">
    <location>
        <position position="51"/>
    </location>
    <ligand>
        <name>NADP(+)</name>
        <dbReference type="ChEBI" id="CHEBI:58349"/>
    </ligand>
</feature>
<feature type="binding site" evidence="1">
    <location>
        <position position="53"/>
    </location>
    <ligand>
        <name>NADP(+)</name>
        <dbReference type="ChEBI" id="CHEBI:58349"/>
    </ligand>
</feature>
<feature type="binding site" evidence="1">
    <location>
        <begin position="83"/>
        <end position="86"/>
    </location>
    <ligand>
        <name>NADP(+)</name>
        <dbReference type="ChEBI" id="CHEBI:58349"/>
    </ligand>
</feature>
<feature type="binding site" evidence="1">
    <location>
        <position position="134"/>
    </location>
    <ligand>
        <name>NADP(+)</name>
        <dbReference type="ChEBI" id="CHEBI:58349"/>
    </ligand>
</feature>
<feature type="binding site" evidence="1">
    <location>
        <position position="191"/>
    </location>
    <ligand>
        <name>Mg(2+)</name>
        <dbReference type="ChEBI" id="CHEBI:18420"/>
        <label>1</label>
    </ligand>
</feature>
<feature type="binding site" evidence="1">
    <location>
        <position position="191"/>
    </location>
    <ligand>
        <name>Mg(2+)</name>
        <dbReference type="ChEBI" id="CHEBI:18420"/>
        <label>2</label>
    </ligand>
</feature>
<feature type="binding site" evidence="1">
    <location>
        <position position="195"/>
    </location>
    <ligand>
        <name>Mg(2+)</name>
        <dbReference type="ChEBI" id="CHEBI:18420"/>
        <label>1</label>
    </ligand>
</feature>
<feature type="binding site" evidence="1">
    <location>
        <position position="227"/>
    </location>
    <ligand>
        <name>Mg(2+)</name>
        <dbReference type="ChEBI" id="CHEBI:18420"/>
        <label>2</label>
    </ligand>
</feature>
<feature type="binding site" evidence="1">
    <location>
        <position position="231"/>
    </location>
    <ligand>
        <name>Mg(2+)</name>
        <dbReference type="ChEBI" id="CHEBI:18420"/>
        <label>2</label>
    </ligand>
</feature>
<feature type="binding site" evidence="1">
    <location>
        <position position="252"/>
    </location>
    <ligand>
        <name>substrate</name>
    </ligand>
</feature>
<name>ILVC_THEMA</name>
<protein>
    <recommendedName>
        <fullName evidence="1">Ketol-acid reductoisomerase (NADP(+))</fullName>
        <shortName evidence="1">KARI</shortName>
        <ecNumber evidence="1">1.1.1.86</ecNumber>
    </recommendedName>
    <alternativeName>
        <fullName evidence="1">Acetohydroxy-acid isomeroreductase</fullName>
        <shortName evidence="1">AHIR</shortName>
    </alternativeName>
    <alternativeName>
        <fullName evidence="1">Alpha-keto-beta-hydroxylacyl reductoisomerase</fullName>
    </alternativeName>
    <alternativeName>
        <fullName evidence="1">Ketol-acid reductoisomerase type 1</fullName>
    </alternativeName>
    <alternativeName>
        <fullName evidence="1">Ketol-acid reductoisomerase type I</fullName>
    </alternativeName>
</protein>
<reference key="1">
    <citation type="journal article" date="1999" name="Nature">
        <title>Evidence for lateral gene transfer between Archaea and Bacteria from genome sequence of Thermotoga maritima.</title>
        <authorList>
            <person name="Nelson K.E."/>
            <person name="Clayton R.A."/>
            <person name="Gill S.R."/>
            <person name="Gwinn M.L."/>
            <person name="Dodson R.J."/>
            <person name="Haft D.H."/>
            <person name="Hickey E.K."/>
            <person name="Peterson J.D."/>
            <person name="Nelson W.C."/>
            <person name="Ketchum K.A."/>
            <person name="McDonald L.A."/>
            <person name="Utterback T.R."/>
            <person name="Malek J.A."/>
            <person name="Linher K.D."/>
            <person name="Garrett M.M."/>
            <person name="Stewart A.M."/>
            <person name="Cotton M.D."/>
            <person name="Pratt M.S."/>
            <person name="Phillips C.A."/>
            <person name="Richardson D.L."/>
            <person name="Heidelberg J.F."/>
            <person name="Sutton G.G."/>
            <person name="Fleischmann R.D."/>
            <person name="Eisen J.A."/>
            <person name="White O."/>
            <person name="Salzberg S.L."/>
            <person name="Smith H.O."/>
            <person name="Venter J.C."/>
            <person name="Fraser C.M."/>
        </authorList>
    </citation>
    <scope>NUCLEOTIDE SEQUENCE [LARGE SCALE GENOMIC DNA]</scope>
    <source>
        <strain>ATCC 43589 / DSM 3109 / JCM 10099 / NBRC 100826 / MSB8</strain>
    </source>
</reference>
<gene>
    <name evidence="1" type="primary">ilvC</name>
    <name type="ordered locus">TM_0550</name>
</gene>
<organism>
    <name type="scientific">Thermotoga maritima (strain ATCC 43589 / DSM 3109 / JCM 10099 / NBRC 100826 / MSB8)</name>
    <dbReference type="NCBI Taxonomy" id="243274"/>
    <lineage>
        <taxon>Bacteria</taxon>
        <taxon>Thermotogati</taxon>
        <taxon>Thermotogota</taxon>
        <taxon>Thermotogae</taxon>
        <taxon>Thermotogales</taxon>
        <taxon>Thermotogaceae</taxon>
        <taxon>Thermotoga</taxon>
    </lineage>
</organism>
<sequence>MAVIYYDKDADLNLIKDKKIAIIGYGSQGHAHALNLKDSGLNVVVGLREGSKSWKKAEEQGLTVKTIEEAAKEADIIMILIPDEHQPEIYKKYIEKHLTEGKMLMFAHGFNIHYHQIIPPKNVDVTMIAPKSPGHIVRREYVEGRGVPALVAVYQDYTGKAKDIALAYAKGIGVTRAGVIETTFKEETETDLFGEQAVLCGGVTALIKAGFETLVDAGYQPEIAYFECLNELKLIVDLIYEGGLSFMRYSVSNTAEYGDYISQEKIVTKEVRENMKQMLKDIQTGKFAKDWILENQAGRPYFYTMRKKESEHLIEKVGKELRKMMPWLKERNVDEE</sequence>
<dbReference type="EC" id="1.1.1.86" evidence="1"/>
<dbReference type="EMBL" id="AE000512">
    <property type="protein sequence ID" value="AAD35635.1"/>
    <property type="molecule type" value="Genomic_DNA"/>
</dbReference>
<dbReference type="PIR" id="D72362">
    <property type="entry name" value="D72362"/>
</dbReference>
<dbReference type="RefSeq" id="NP_228360.1">
    <property type="nucleotide sequence ID" value="NC_000853.1"/>
</dbReference>
<dbReference type="RefSeq" id="WP_004081338.1">
    <property type="nucleotide sequence ID" value="NZ_CP011107.1"/>
</dbReference>
<dbReference type="SMR" id="Q9WZ20"/>
<dbReference type="FunCoup" id="Q9WZ20">
    <property type="interactions" value="352"/>
</dbReference>
<dbReference type="STRING" id="243274.TM_0550"/>
<dbReference type="PaxDb" id="243274-THEMA_01925"/>
<dbReference type="EnsemblBacteria" id="AAD35635">
    <property type="protein sequence ID" value="AAD35635"/>
    <property type="gene ID" value="TM_0550"/>
</dbReference>
<dbReference type="KEGG" id="tma:TM0550"/>
<dbReference type="KEGG" id="tmi:THEMA_01925"/>
<dbReference type="KEGG" id="tmm:Tmari_0547"/>
<dbReference type="KEGG" id="tmw:THMA_0563"/>
<dbReference type="eggNOG" id="COG0059">
    <property type="taxonomic scope" value="Bacteria"/>
</dbReference>
<dbReference type="InParanoid" id="Q9WZ20"/>
<dbReference type="OrthoDB" id="9804088at2"/>
<dbReference type="UniPathway" id="UPA00047">
    <property type="reaction ID" value="UER00056"/>
</dbReference>
<dbReference type="UniPathway" id="UPA00049">
    <property type="reaction ID" value="UER00060"/>
</dbReference>
<dbReference type="Proteomes" id="UP000008183">
    <property type="component" value="Chromosome"/>
</dbReference>
<dbReference type="GO" id="GO:0005829">
    <property type="term" value="C:cytosol"/>
    <property type="evidence" value="ECO:0000318"/>
    <property type="project" value="GO_Central"/>
</dbReference>
<dbReference type="GO" id="GO:0004455">
    <property type="term" value="F:ketol-acid reductoisomerase activity"/>
    <property type="evidence" value="ECO:0000318"/>
    <property type="project" value="GO_Central"/>
</dbReference>
<dbReference type="GO" id="GO:0000287">
    <property type="term" value="F:magnesium ion binding"/>
    <property type="evidence" value="ECO:0007669"/>
    <property type="project" value="UniProtKB-UniRule"/>
</dbReference>
<dbReference type="GO" id="GO:0050661">
    <property type="term" value="F:NADP binding"/>
    <property type="evidence" value="ECO:0007669"/>
    <property type="project" value="InterPro"/>
</dbReference>
<dbReference type="GO" id="GO:0009097">
    <property type="term" value="P:isoleucine biosynthetic process"/>
    <property type="evidence" value="ECO:0000318"/>
    <property type="project" value="GO_Central"/>
</dbReference>
<dbReference type="GO" id="GO:0009099">
    <property type="term" value="P:L-valine biosynthetic process"/>
    <property type="evidence" value="ECO:0000318"/>
    <property type="project" value="GO_Central"/>
</dbReference>
<dbReference type="FunFam" id="3.40.50.720:FF:000023">
    <property type="entry name" value="Ketol-acid reductoisomerase (NADP(+))"/>
    <property type="match status" value="1"/>
</dbReference>
<dbReference type="Gene3D" id="6.10.240.10">
    <property type="match status" value="1"/>
</dbReference>
<dbReference type="Gene3D" id="3.40.50.720">
    <property type="entry name" value="NAD(P)-binding Rossmann-like Domain"/>
    <property type="match status" value="1"/>
</dbReference>
<dbReference type="HAMAP" id="MF_00435">
    <property type="entry name" value="IlvC"/>
    <property type="match status" value="1"/>
</dbReference>
<dbReference type="InterPro" id="IPR008927">
    <property type="entry name" value="6-PGluconate_DH-like_C_sf"/>
</dbReference>
<dbReference type="InterPro" id="IPR013023">
    <property type="entry name" value="KARI"/>
</dbReference>
<dbReference type="InterPro" id="IPR000506">
    <property type="entry name" value="KARI_C"/>
</dbReference>
<dbReference type="InterPro" id="IPR013116">
    <property type="entry name" value="KARI_N"/>
</dbReference>
<dbReference type="InterPro" id="IPR014359">
    <property type="entry name" value="KARI_prok"/>
</dbReference>
<dbReference type="InterPro" id="IPR036291">
    <property type="entry name" value="NAD(P)-bd_dom_sf"/>
</dbReference>
<dbReference type="NCBIfam" id="TIGR00465">
    <property type="entry name" value="ilvC"/>
    <property type="match status" value="1"/>
</dbReference>
<dbReference type="NCBIfam" id="NF004017">
    <property type="entry name" value="PRK05479.1"/>
    <property type="match status" value="1"/>
</dbReference>
<dbReference type="NCBIfam" id="NF009940">
    <property type="entry name" value="PRK13403.1"/>
    <property type="match status" value="1"/>
</dbReference>
<dbReference type="PANTHER" id="PTHR21371">
    <property type="entry name" value="KETOL-ACID REDUCTOISOMERASE, MITOCHONDRIAL"/>
    <property type="match status" value="1"/>
</dbReference>
<dbReference type="PANTHER" id="PTHR21371:SF1">
    <property type="entry name" value="KETOL-ACID REDUCTOISOMERASE, MITOCHONDRIAL"/>
    <property type="match status" value="1"/>
</dbReference>
<dbReference type="Pfam" id="PF01450">
    <property type="entry name" value="KARI_C"/>
    <property type="match status" value="1"/>
</dbReference>
<dbReference type="Pfam" id="PF07991">
    <property type="entry name" value="KARI_N"/>
    <property type="match status" value="1"/>
</dbReference>
<dbReference type="PIRSF" id="PIRSF000116">
    <property type="entry name" value="IlvC_gammaproteo"/>
    <property type="match status" value="1"/>
</dbReference>
<dbReference type="SUPFAM" id="SSF48179">
    <property type="entry name" value="6-phosphogluconate dehydrogenase C-terminal domain-like"/>
    <property type="match status" value="1"/>
</dbReference>
<dbReference type="SUPFAM" id="SSF51735">
    <property type="entry name" value="NAD(P)-binding Rossmann-fold domains"/>
    <property type="match status" value="1"/>
</dbReference>
<dbReference type="PROSITE" id="PS51851">
    <property type="entry name" value="KARI_C"/>
    <property type="match status" value="1"/>
</dbReference>
<dbReference type="PROSITE" id="PS51850">
    <property type="entry name" value="KARI_N"/>
    <property type="match status" value="1"/>
</dbReference>
<accession>Q9WZ20</accession>